<name>PURU_ECOLI</name>
<protein>
    <recommendedName>
        <fullName evidence="1">Formyltetrahydrofolate deformylase</fullName>
        <ecNumber evidence="1">3.5.1.10</ecNumber>
    </recommendedName>
    <alternativeName>
        <fullName evidence="1">Formyl-FH(4) hydrolase</fullName>
    </alternativeName>
</protein>
<accession>P37051</accession>
<sequence length="280" mass="31935">MHSLQRKVLRTICPDQKGLIARITNICYKHELNIVQNNEFVDHRTGRFFMRTELEGIFNDSTLLADLDSALPEGSVRELNPAGRRRIVILVTKEAHCLGDLLMKANYGGLDVEIAAVIGNHDTLRSLVERFDIPFELVSHEGLTRNEHDQKMADAIDAYQPDYVVLAKYMRVLTPEFVARFPNKIINIHHSFLPAFIGARPYHQAYERGVKIIGATAHYVNDNLDEGPIIMQDVIHVDHTYTAEDMMRAGRDVEKNVLSRALYKVLAQRVFVYGNRTIIL</sequence>
<proteinExistence type="evidence at protein level"/>
<reference key="1">
    <citation type="journal article" date="1993" name="J. Bacteriol.">
        <title>purU, a source of formate for purT-dependent phosphoribosyl-N-formylglycinamide synthesis.</title>
        <authorList>
            <person name="Nagy P.L."/>
            <person name="McCorkle G."/>
            <person name="Zalkin H."/>
        </authorList>
    </citation>
    <scope>NUCLEOTIDE SEQUENCE [GENOMIC DNA]</scope>
    <scope>PROTEIN SEQUENCE OF 1-6</scope>
    <source>
        <strain>K12</strain>
    </source>
</reference>
<reference key="2">
    <citation type="journal article" date="1994" name="J. Bacteriol.">
        <title>Organization and functions of genes in the upstream region of tyrT of Escherichia coli: phenotypes of mutants with partial deletion of a new gene (tgs).</title>
        <authorList>
            <person name="Boesl M."/>
            <person name="Kersten H."/>
        </authorList>
    </citation>
    <scope>NUCLEOTIDE SEQUENCE [GENOMIC DNA]</scope>
    <source>
        <strain>K12 / MG1655 / ATCC 47076</strain>
    </source>
</reference>
<reference key="3">
    <citation type="journal article" date="1996" name="DNA Res.">
        <title>A 718-kb DNA sequence of the Escherichia coli K-12 genome corresponding to the 12.7-28.0 min region on the linkage map.</title>
        <authorList>
            <person name="Oshima T."/>
            <person name="Aiba H."/>
            <person name="Baba T."/>
            <person name="Fujita K."/>
            <person name="Hayashi K."/>
            <person name="Honjo A."/>
            <person name="Ikemoto K."/>
            <person name="Inada T."/>
            <person name="Itoh T."/>
            <person name="Kajihara M."/>
            <person name="Kanai K."/>
            <person name="Kashimoto K."/>
            <person name="Kimura S."/>
            <person name="Kitagawa M."/>
            <person name="Makino K."/>
            <person name="Masuda S."/>
            <person name="Miki T."/>
            <person name="Mizobuchi K."/>
            <person name="Mori H."/>
            <person name="Motomura K."/>
            <person name="Nakamura Y."/>
            <person name="Nashimoto H."/>
            <person name="Nishio Y."/>
            <person name="Saito N."/>
            <person name="Sampei G."/>
            <person name="Seki Y."/>
            <person name="Tagami H."/>
            <person name="Takemoto K."/>
            <person name="Wada C."/>
            <person name="Yamamoto Y."/>
            <person name="Yano M."/>
            <person name="Horiuchi T."/>
        </authorList>
    </citation>
    <scope>NUCLEOTIDE SEQUENCE [LARGE SCALE GENOMIC DNA]</scope>
    <source>
        <strain>K12 / W3110 / ATCC 27325 / DSM 5911</strain>
    </source>
</reference>
<reference key="4">
    <citation type="journal article" date="1997" name="Science">
        <title>The complete genome sequence of Escherichia coli K-12.</title>
        <authorList>
            <person name="Blattner F.R."/>
            <person name="Plunkett G. III"/>
            <person name="Bloch C.A."/>
            <person name="Perna N.T."/>
            <person name="Burland V."/>
            <person name="Riley M."/>
            <person name="Collado-Vides J."/>
            <person name="Glasner J.D."/>
            <person name="Rode C.K."/>
            <person name="Mayhew G.F."/>
            <person name="Gregor J."/>
            <person name="Davis N.W."/>
            <person name="Kirkpatrick H.A."/>
            <person name="Goeden M.A."/>
            <person name="Rose D.J."/>
            <person name="Mau B."/>
            <person name="Shao Y."/>
        </authorList>
    </citation>
    <scope>NUCLEOTIDE SEQUENCE [LARGE SCALE GENOMIC DNA]</scope>
    <source>
        <strain>K12 / MG1655 / ATCC 47076</strain>
    </source>
</reference>
<reference key="5">
    <citation type="journal article" date="2006" name="Mol. Syst. Biol.">
        <title>Highly accurate genome sequences of Escherichia coli K-12 strains MG1655 and W3110.</title>
        <authorList>
            <person name="Hayashi K."/>
            <person name="Morooka N."/>
            <person name="Yamamoto Y."/>
            <person name="Fujita K."/>
            <person name="Isono K."/>
            <person name="Choi S."/>
            <person name="Ohtsubo E."/>
            <person name="Baba T."/>
            <person name="Wanner B.L."/>
            <person name="Mori H."/>
            <person name="Horiuchi T."/>
        </authorList>
    </citation>
    <scope>NUCLEOTIDE SEQUENCE [LARGE SCALE GENOMIC DNA]</scope>
    <source>
        <strain>K12 / W3110 / ATCC 27325 / DSM 5911</strain>
    </source>
</reference>
<reference key="6">
    <citation type="journal article" date="1995" name="J. Bacteriol.">
        <title>Formyltetrahydrofolate hydrolase, a regulatory enzyme that functions to balance pools of tetrahydrofolate and one-carbon tetrahydrofolate adducts in Escherichia coli.</title>
        <authorList>
            <person name="Nagy P.L."/>
            <person name="Marolewski A."/>
            <person name="Benkovic S.J."/>
            <person name="Zalkin H."/>
        </authorList>
    </citation>
    <scope>FUNCTION</scope>
    <scope>CATALYTIC ACTIVITY</scope>
    <scope>ACTIVITY REGULATION</scope>
    <scope>PATHWAY</scope>
    <scope>SUBUNIT</scope>
</reference>
<dbReference type="EC" id="3.5.1.10" evidence="1"/>
<dbReference type="EMBL" id="L20251">
    <property type="protein sequence ID" value="AAC36846.1"/>
    <property type="molecule type" value="Unassigned_DNA"/>
</dbReference>
<dbReference type="EMBL" id="M64675">
    <property type="protein sequence ID" value="AAA16860.1"/>
    <property type="status" value="ALT_INIT"/>
    <property type="molecule type" value="Unassigned_DNA"/>
</dbReference>
<dbReference type="EMBL" id="U00096">
    <property type="protein sequence ID" value="AAC74314.1"/>
    <property type="molecule type" value="Genomic_DNA"/>
</dbReference>
<dbReference type="EMBL" id="AP009048">
    <property type="protein sequence ID" value="BAA36100.1"/>
    <property type="molecule type" value="Genomic_DNA"/>
</dbReference>
<dbReference type="PIR" id="C36871">
    <property type="entry name" value="C36871"/>
</dbReference>
<dbReference type="RefSeq" id="NP_415748.1">
    <property type="nucleotide sequence ID" value="NC_000913.3"/>
</dbReference>
<dbReference type="RefSeq" id="WP_000555857.1">
    <property type="nucleotide sequence ID" value="NZ_SSZK01000031.1"/>
</dbReference>
<dbReference type="SMR" id="P37051"/>
<dbReference type="BioGRID" id="4261924">
    <property type="interactions" value="14"/>
</dbReference>
<dbReference type="FunCoup" id="P37051">
    <property type="interactions" value="504"/>
</dbReference>
<dbReference type="IntAct" id="P37051">
    <property type="interactions" value="3"/>
</dbReference>
<dbReference type="STRING" id="511145.b1232"/>
<dbReference type="jPOST" id="P37051"/>
<dbReference type="PaxDb" id="511145-b1232"/>
<dbReference type="DNASU" id="945827"/>
<dbReference type="EnsemblBacteria" id="AAC74314">
    <property type="protein sequence ID" value="AAC74314"/>
    <property type="gene ID" value="b1232"/>
</dbReference>
<dbReference type="GeneID" id="945827"/>
<dbReference type="KEGG" id="ecj:JW1220"/>
<dbReference type="KEGG" id="eco:b1232"/>
<dbReference type="KEGG" id="ecoc:C3026_07250"/>
<dbReference type="PATRIC" id="fig|1411691.4.peg.1053"/>
<dbReference type="EchoBASE" id="EB1766"/>
<dbReference type="eggNOG" id="COG0788">
    <property type="taxonomic scope" value="Bacteria"/>
</dbReference>
<dbReference type="HOGENOM" id="CLU_038395_3_2_6"/>
<dbReference type="InParanoid" id="P37051"/>
<dbReference type="OMA" id="QILNIHH"/>
<dbReference type="OrthoDB" id="9806170at2"/>
<dbReference type="PhylomeDB" id="P37051"/>
<dbReference type="BioCyc" id="EcoCyc:FORMYLTHFDEFORMYL-MONOMER"/>
<dbReference type="BioCyc" id="MetaCyc:FORMYLTHFDEFORMYL-MONOMER"/>
<dbReference type="BRENDA" id="3.5.1.10">
    <property type="organism ID" value="2026"/>
</dbReference>
<dbReference type="UniPathway" id="UPA00074">
    <property type="reaction ID" value="UER00170"/>
</dbReference>
<dbReference type="PRO" id="PR:P37051"/>
<dbReference type="Proteomes" id="UP000000625">
    <property type="component" value="Chromosome"/>
</dbReference>
<dbReference type="GO" id="GO:0005829">
    <property type="term" value="C:cytosol"/>
    <property type="evidence" value="ECO:0000314"/>
    <property type="project" value="EcoCyc"/>
</dbReference>
<dbReference type="GO" id="GO:0008864">
    <property type="term" value="F:formyltetrahydrofolate deformylase activity"/>
    <property type="evidence" value="ECO:0000314"/>
    <property type="project" value="EcoCyc"/>
</dbReference>
<dbReference type="GO" id="GO:0042802">
    <property type="term" value="F:identical protein binding"/>
    <property type="evidence" value="ECO:0000314"/>
    <property type="project" value="EcoCyc"/>
</dbReference>
<dbReference type="GO" id="GO:0006189">
    <property type="term" value="P:'de novo' IMP biosynthetic process"/>
    <property type="evidence" value="ECO:0007669"/>
    <property type="project" value="UniProtKB-UniRule"/>
</dbReference>
<dbReference type="GO" id="GO:0006730">
    <property type="term" value="P:one-carbon metabolic process"/>
    <property type="evidence" value="ECO:0000304"/>
    <property type="project" value="EcoCyc"/>
</dbReference>
<dbReference type="GO" id="GO:0034214">
    <property type="term" value="P:protein hexamerization"/>
    <property type="evidence" value="ECO:0000314"/>
    <property type="project" value="EcoCyc"/>
</dbReference>
<dbReference type="GO" id="GO:0006164">
    <property type="term" value="P:purine nucleotide biosynthetic process"/>
    <property type="evidence" value="ECO:0000315"/>
    <property type="project" value="CACAO"/>
</dbReference>
<dbReference type="CDD" id="cd04875">
    <property type="entry name" value="ACT_F4HF-DF"/>
    <property type="match status" value="1"/>
</dbReference>
<dbReference type="CDD" id="cd08648">
    <property type="entry name" value="FMT_core_Formyl-FH4-Hydrolase_C"/>
    <property type="match status" value="1"/>
</dbReference>
<dbReference type="FunFam" id="3.30.70.260:FF:000021">
    <property type="entry name" value="Formyltetrahydrofolate deformylase"/>
    <property type="match status" value="1"/>
</dbReference>
<dbReference type="FunFam" id="3.40.50.170:FF:000001">
    <property type="entry name" value="Formyltetrahydrofolate deformylase"/>
    <property type="match status" value="1"/>
</dbReference>
<dbReference type="Gene3D" id="3.30.70.260">
    <property type="match status" value="1"/>
</dbReference>
<dbReference type="Gene3D" id="3.40.50.170">
    <property type="entry name" value="Formyl transferase, N-terminal domain"/>
    <property type="match status" value="1"/>
</dbReference>
<dbReference type="HAMAP" id="MF_01927">
    <property type="entry name" value="PurU"/>
    <property type="match status" value="1"/>
</dbReference>
<dbReference type="InterPro" id="IPR045865">
    <property type="entry name" value="ACT-like_dom_sf"/>
</dbReference>
<dbReference type="InterPro" id="IPR002912">
    <property type="entry name" value="ACT_dom"/>
</dbReference>
<dbReference type="InterPro" id="IPR041729">
    <property type="entry name" value="Formyl-FH4-Hydrolase_C"/>
</dbReference>
<dbReference type="InterPro" id="IPR002376">
    <property type="entry name" value="Formyl_transf_N"/>
</dbReference>
<dbReference type="InterPro" id="IPR036477">
    <property type="entry name" value="Formyl_transf_N_sf"/>
</dbReference>
<dbReference type="InterPro" id="IPR004810">
    <property type="entry name" value="PurU"/>
</dbReference>
<dbReference type="InterPro" id="IPR044074">
    <property type="entry name" value="PurU_ACT"/>
</dbReference>
<dbReference type="NCBIfam" id="NF004684">
    <property type="entry name" value="PRK06027.1"/>
    <property type="match status" value="1"/>
</dbReference>
<dbReference type="NCBIfam" id="TIGR00655">
    <property type="entry name" value="PurU"/>
    <property type="match status" value="1"/>
</dbReference>
<dbReference type="PANTHER" id="PTHR42706">
    <property type="entry name" value="FORMYLTETRAHYDROFOLATE DEFORMYLASE"/>
    <property type="match status" value="1"/>
</dbReference>
<dbReference type="PANTHER" id="PTHR42706:SF1">
    <property type="entry name" value="FORMYLTETRAHYDROFOLATE DEFORMYLASE 2, MITOCHONDRIAL"/>
    <property type="match status" value="1"/>
</dbReference>
<dbReference type="Pfam" id="PF01842">
    <property type="entry name" value="ACT"/>
    <property type="match status" value="1"/>
</dbReference>
<dbReference type="Pfam" id="PF00551">
    <property type="entry name" value="Formyl_trans_N"/>
    <property type="match status" value="1"/>
</dbReference>
<dbReference type="PIRSF" id="PIRSF036480">
    <property type="entry name" value="FormyFH4_hydr"/>
    <property type="match status" value="1"/>
</dbReference>
<dbReference type="PRINTS" id="PR01575">
    <property type="entry name" value="FFH4HYDRLASE"/>
</dbReference>
<dbReference type="SUPFAM" id="SSF55021">
    <property type="entry name" value="ACT-like"/>
    <property type="match status" value="1"/>
</dbReference>
<dbReference type="SUPFAM" id="SSF53328">
    <property type="entry name" value="Formyltransferase"/>
    <property type="match status" value="1"/>
</dbReference>
<dbReference type="PROSITE" id="PS51671">
    <property type="entry name" value="ACT"/>
    <property type="match status" value="1"/>
</dbReference>
<comment type="function">
    <text evidence="1 2">Catalyzes the hydrolysis of 10-formyltetrahydrofolate (formyl-FH4) to formate and tetrahydrofolate (FH4). Provides the major source of formate for the PurT-dependent synthesis of 5'-phosphoribosyl-N-formylglycinamide (FGAR) during aerobic growth. Has a role in regulating the one-carbon pool.</text>
</comment>
<comment type="catalytic activity">
    <reaction evidence="1 2">
        <text>(6R)-10-formyltetrahydrofolate + H2O = (6S)-5,6,7,8-tetrahydrofolate + formate + H(+)</text>
        <dbReference type="Rhea" id="RHEA:19833"/>
        <dbReference type="ChEBI" id="CHEBI:15377"/>
        <dbReference type="ChEBI" id="CHEBI:15378"/>
        <dbReference type="ChEBI" id="CHEBI:15740"/>
        <dbReference type="ChEBI" id="CHEBI:57453"/>
        <dbReference type="ChEBI" id="CHEBI:195366"/>
        <dbReference type="EC" id="3.5.1.10"/>
    </reaction>
</comment>
<comment type="activity regulation">
    <text evidence="2">Activated by methionine, inhibited by glycine.</text>
</comment>
<comment type="pathway">
    <text evidence="1 2">Purine metabolism; IMP biosynthesis via de novo pathway; formate from 10-formyl-5,6,7,8-tetrahydrofolate: step 1/1.</text>
</comment>
<comment type="subunit">
    <text evidence="2">Homohexamer.</text>
</comment>
<comment type="similarity">
    <text evidence="1">Belongs to the PurU family.</text>
</comment>
<comment type="sequence caution" evidence="3">
    <conflict type="erroneous initiation">
        <sequence resource="EMBL-CDS" id="AAA16860"/>
    </conflict>
</comment>
<keyword id="KW-0903">Direct protein sequencing</keyword>
<keyword id="KW-0378">Hydrolase</keyword>
<keyword id="KW-0554">One-carbon metabolism</keyword>
<keyword id="KW-0658">Purine biosynthesis</keyword>
<keyword id="KW-1185">Reference proteome</keyword>
<evidence type="ECO:0000255" key="1">
    <source>
        <dbReference type="HAMAP-Rule" id="MF_01927"/>
    </source>
</evidence>
<evidence type="ECO:0000269" key="2">
    <source>
    </source>
</evidence>
<evidence type="ECO:0000305" key="3"/>
<gene>
    <name evidence="1" type="primary">purU</name>
    <name type="synonym">tgs</name>
    <name type="synonym">ychI</name>
    <name type="ordered locus">b1232</name>
    <name type="ordered locus">JW1220</name>
</gene>
<organism>
    <name type="scientific">Escherichia coli (strain K12)</name>
    <dbReference type="NCBI Taxonomy" id="83333"/>
    <lineage>
        <taxon>Bacteria</taxon>
        <taxon>Pseudomonadati</taxon>
        <taxon>Pseudomonadota</taxon>
        <taxon>Gammaproteobacteria</taxon>
        <taxon>Enterobacterales</taxon>
        <taxon>Enterobacteriaceae</taxon>
        <taxon>Escherichia</taxon>
    </lineage>
</organism>
<feature type="chain" id="PRO_0000074961" description="Formyltetrahydrofolate deformylase">
    <location>
        <begin position="1"/>
        <end position="280"/>
    </location>
</feature>
<feature type="domain" description="ACT" evidence="1">
    <location>
        <begin position="8"/>
        <end position="86"/>
    </location>
</feature>
<feature type="active site" evidence="1">
    <location>
        <position position="225"/>
    </location>
</feature>